<gene>
    <name type="primary">gapA2</name>
    <name type="synonym">gapB</name>
    <name type="ordered locus">SAS1615</name>
</gene>
<feature type="chain" id="PRO_0000145695" description="Glyceraldehyde-3-phosphate dehydrogenase 2">
    <location>
        <begin position="1"/>
        <end position="341"/>
    </location>
</feature>
<feature type="active site" description="Nucleophile" evidence="2">
    <location>
        <position position="153"/>
    </location>
</feature>
<feature type="binding site" evidence="2">
    <location>
        <begin position="12"/>
        <end position="13"/>
    </location>
    <ligand>
        <name>NAD(+)</name>
        <dbReference type="ChEBI" id="CHEBI:57540"/>
    </ligand>
</feature>
<feature type="binding site" evidence="2">
    <location>
        <position position="78"/>
    </location>
    <ligand>
        <name>NAD(+)</name>
        <dbReference type="ChEBI" id="CHEBI:57540"/>
    </ligand>
</feature>
<feature type="binding site" evidence="2">
    <location>
        <position position="120"/>
    </location>
    <ligand>
        <name>NAD(+)</name>
        <dbReference type="ChEBI" id="CHEBI:57540"/>
    </ligand>
</feature>
<feature type="binding site" evidence="2">
    <location>
        <begin position="152"/>
        <end position="154"/>
    </location>
    <ligand>
        <name>D-glyceraldehyde 3-phosphate</name>
        <dbReference type="ChEBI" id="CHEBI:59776"/>
    </ligand>
</feature>
<feature type="binding site" evidence="2">
    <location>
        <position position="183"/>
    </location>
    <ligand>
        <name>D-glyceraldehyde 3-phosphate</name>
        <dbReference type="ChEBI" id="CHEBI:59776"/>
    </ligand>
</feature>
<feature type="binding site" evidence="2">
    <location>
        <position position="184"/>
    </location>
    <ligand>
        <name>NAD(+)</name>
        <dbReference type="ChEBI" id="CHEBI:57540"/>
    </ligand>
</feature>
<feature type="binding site" evidence="1">
    <location>
        <position position="198"/>
    </location>
    <ligand>
        <name>D-glyceraldehyde 3-phosphate</name>
        <dbReference type="ChEBI" id="CHEBI:59776"/>
    </ligand>
</feature>
<feature type="binding site" evidence="2">
    <location>
        <begin position="211"/>
        <end position="212"/>
    </location>
    <ligand>
        <name>D-glyceraldehyde 3-phosphate</name>
        <dbReference type="ChEBI" id="CHEBI:59776"/>
    </ligand>
</feature>
<feature type="binding site" evidence="2">
    <location>
        <position position="234"/>
    </location>
    <ligand>
        <name>D-glyceraldehyde 3-phosphate</name>
        <dbReference type="ChEBI" id="CHEBI:59776"/>
    </ligand>
</feature>
<feature type="binding site" evidence="2">
    <location>
        <position position="313"/>
    </location>
    <ligand>
        <name>NAD(+)</name>
        <dbReference type="ChEBI" id="CHEBI:57540"/>
    </ligand>
</feature>
<feature type="site" description="Activates thiol group during catalysis" evidence="2">
    <location>
        <position position="180"/>
    </location>
</feature>
<evidence type="ECO:0000250" key="1">
    <source>
        <dbReference type="UniProtKB" id="P00362"/>
    </source>
</evidence>
<evidence type="ECO:0000250" key="2">
    <source>
        <dbReference type="UniProtKB" id="Q6GIL8"/>
    </source>
</evidence>
<evidence type="ECO:0000305" key="3"/>
<accession>Q6G8N9</accession>
<comment type="function">
    <text evidence="2">Catalyzes the oxidative phosphorylation of glyceraldehyde 3-phosphate (G3P) to 1,3-bisphosphoglycerate (BPG) using the cofactor NAD. The first reaction step involves the formation of a hemiacetal intermediate between G3P and a cysteine residue, and this hemiacetal intermediate is then oxidized to a thioester, with concomitant reduction of NAD to NADH. The reduced NADH is then exchanged with the second NAD, and the thioester is attacked by a nucleophilic inorganic phosphate to produce BPG.</text>
</comment>
<comment type="catalytic activity">
    <reaction evidence="2">
        <text>D-glyceraldehyde 3-phosphate + phosphate + NAD(+) = (2R)-3-phospho-glyceroyl phosphate + NADH + H(+)</text>
        <dbReference type="Rhea" id="RHEA:10300"/>
        <dbReference type="ChEBI" id="CHEBI:15378"/>
        <dbReference type="ChEBI" id="CHEBI:43474"/>
        <dbReference type="ChEBI" id="CHEBI:57540"/>
        <dbReference type="ChEBI" id="CHEBI:57604"/>
        <dbReference type="ChEBI" id="CHEBI:57945"/>
        <dbReference type="ChEBI" id="CHEBI:59776"/>
        <dbReference type="EC" id="1.2.1.12"/>
    </reaction>
</comment>
<comment type="pathway">
    <text evidence="3">Carbohydrate degradation; glycolysis; pyruvate from D-glyceraldehyde 3-phosphate: step 1/5.</text>
</comment>
<comment type="subunit">
    <text evidence="2">Homotetramer.</text>
</comment>
<comment type="subcellular location">
    <subcellularLocation>
        <location evidence="3">Cytoplasm</location>
    </subcellularLocation>
</comment>
<comment type="similarity">
    <text evidence="3">Belongs to the glyceraldehyde-3-phosphate dehydrogenase family.</text>
</comment>
<keyword id="KW-0963">Cytoplasm</keyword>
<keyword id="KW-0324">Glycolysis</keyword>
<keyword id="KW-0520">NAD</keyword>
<keyword id="KW-0547">Nucleotide-binding</keyword>
<keyword id="KW-0560">Oxidoreductase</keyword>
<name>G3P2_STAAS</name>
<dbReference type="EC" id="1.2.1.12" evidence="2"/>
<dbReference type="EMBL" id="BX571857">
    <property type="protein sequence ID" value="CAG43417.1"/>
    <property type="molecule type" value="Genomic_DNA"/>
</dbReference>
<dbReference type="SMR" id="Q6G8N9"/>
<dbReference type="KEGG" id="sas:SAS1615"/>
<dbReference type="HOGENOM" id="CLU_030140_0_2_9"/>
<dbReference type="UniPathway" id="UPA00109">
    <property type="reaction ID" value="UER00184"/>
</dbReference>
<dbReference type="GO" id="GO:0005737">
    <property type="term" value="C:cytoplasm"/>
    <property type="evidence" value="ECO:0007669"/>
    <property type="project" value="UniProtKB-SubCell"/>
</dbReference>
<dbReference type="GO" id="GO:0004365">
    <property type="term" value="F:glyceraldehyde-3-phosphate dehydrogenase (NAD+) (phosphorylating) activity"/>
    <property type="evidence" value="ECO:0000250"/>
    <property type="project" value="UniProtKB"/>
</dbReference>
<dbReference type="GO" id="GO:0051287">
    <property type="term" value="F:NAD binding"/>
    <property type="evidence" value="ECO:0000250"/>
    <property type="project" value="UniProtKB"/>
</dbReference>
<dbReference type="GO" id="GO:0050661">
    <property type="term" value="F:NADP binding"/>
    <property type="evidence" value="ECO:0007669"/>
    <property type="project" value="InterPro"/>
</dbReference>
<dbReference type="GO" id="GO:0006006">
    <property type="term" value="P:glucose metabolic process"/>
    <property type="evidence" value="ECO:0007669"/>
    <property type="project" value="InterPro"/>
</dbReference>
<dbReference type="GO" id="GO:0006096">
    <property type="term" value="P:glycolytic process"/>
    <property type="evidence" value="ECO:0007669"/>
    <property type="project" value="UniProtKB-UniPathway"/>
</dbReference>
<dbReference type="CDD" id="cd18126">
    <property type="entry name" value="GAPDH_I_C"/>
    <property type="match status" value="1"/>
</dbReference>
<dbReference type="CDD" id="cd05214">
    <property type="entry name" value="GAPDH_I_N"/>
    <property type="match status" value="1"/>
</dbReference>
<dbReference type="FunFam" id="3.30.360.10:FF:000002">
    <property type="entry name" value="Glyceraldehyde-3-phosphate dehydrogenase"/>
    <property type="match status" value="1"/>
</dbReference>
<dbReference type="FunFam" id="3.40.50.720:FF:000001">
    <property type="entry name" value="Glyceraldehyde-3-phosphate dehydrogenase"/>
    <property type="match status" value="1"/>
</dbReference>
<dbReference type="Gene3D" id="3.30.360.10">
    <property type="entry name" value="Dihydrodipicolinate Reductase, domain 2"/>
    <property type="match status" value="1"/>
</dbReference>
<dbReference type="Gene3D" id="3.40.50.720">
    <property type="entry name" value="NAD(P)-binding Rossmann-like Domain"/>
    <property type="match status" value="1"/>
</dbReference>
<dbReference type="InterPro" id="IPR020831">
    <property type="entry name" value="GlycerAld/Erythrose_P_DH"/>
</dbReference>
<dbReference type="InterPro" id="IPR020830">
    <property type="entry name" value="GlycerAld_3-P_DH_AS"/>
</dbReference>
<dbReference type="InterPro" id="IPR020829">
    <property type="entry name" value="GlycerAld_3-P_DH_cat"/>
</dbReference>
<dbReference type="InterPro" id="IPR020828">
    <property type="entry name" value="GlycerAld_3-P_DH_NAD(P)-bd"/>
</dbReference>
<dbReference type="InterPro" id="IPR006424">
    <property type="entry name" value="Glyceraldehyde-3-P_DH_1"/>
</dbReference>
<dbReference type="InterPro" id="IPR036291">
    <property type="entry name" value="NAD(P)-bd_dom_sf"/>
</dbReference>
<dbReference type="NCBIfam" id="TIGR01534">
    <property type="entry name" value="GAPDH-I"/>
    <property type="match status" value="1"/>
</dbReference>
<dbReference type="PANTHER" id="PTHR43148">
    <property type="entry name" value="GLYCERALDEHYDE-3-PHOSPHATE DEHYDROGENASE 2"/>
    <property type="match status" value="1"/>
</dbReference>
<dbReference type="Pfam" id="PF02800">
    <property type="entry name" value="Gp_dh_C"/>
    <property type="match status" value="1"/>
</dbReference>
<dbReference type="Pfam" id="PF00044">
    <property type="entry name" value="Gp_dh_N"/>
    <property type="match status" value="1"/>
</dbReference>
<dbReference type="PIRSF" id="PIRSF000149">
    <property type="entry name" value="GAP_DH"/>
    <property type="match status" value="1"/>
</dbReference>
<dbReference type="PRINTS" id="PR00078">
    <property type="entry name" value="G3PDHDRGNASE"/>
</dbReference>
<dbReference type="SMART" id="SM00846">
    <property type="entry name" value="Gp_dh_N"/>
    <property type="match status" value="1"/>
</dbReference>
<dbReference type="SUPFAM" id="SSF55347">
    <property type="entry name" value="Glyceraldehyde-3-phosphate dehydrogenase-like, C-terminal domain"/>
    <property type="match status" value="1"/>
</dbReference>
<dbReference type="SUPFAM" id="SSF51735">
    <property type="entry name" value="NAD(P)-binding Rossmann-fold domains"/>
    <property type="match status" value="1"/>
</dbReference>
<dbReference type="PROSITE" id="PS00071">
    <property type="entry name" value="GAPDH"/>
    <property type="match status" value="1"/>
</dbReference>
<protein>
    <recommendedName>
        <fullName evidence="2">Glyceraldehyde-3-phosphate dehydrogenase 2</fullName>
        <shortName evidence="2">GAPDH 2</shortName>
        <ecNumber evidence="2">1.2.1.12</ecNumber>
    </recommendedName>
    <alternativeName>
        <fullName evidence="2">NAD-dependent glyceraldehyde-3-phosphate dehydrogenase</fullName>
    </alternativeName>
</protein>
<reference key="1">
    <citation type="journal article" date="2004" name="Proc. Natl. Acad. Sci. U.S.A.">
        <title>Complete genomes of two clinical Staphylococcus aureus strains: evidence for the rapid evolution of virulence and drug resistance.</title>
        <authorList>
            <person name="Holden M.T.G."/>
            <person name="Feil E.J."/>
            <person name="Lindsay J.A."/>
            <person name="Peacock S.J."/>
            <person name="Day N.P.J."/>
            <person name="Enright M.C."/>
            <person name="Foster T.J."/>
            <person name="Moore C.E."/>
            <person name="Hurst L."/>
            <person name="Atkin R."/>
            <person name="Barron A."/>
            <person name="Bason N."/>
            <person name="Bentley S.D."/>
            <person name="Chillingworth C."/>
            <person name="Chillingworth T."/>
            <person name="Churcher C."/>
            <person name="Clark L."/>
            <person name="Corton C."/>
            <person name="Cronin A."/>
            <person name="Doggett J."/>
            <person name="Dowd L."/>
            <person name="Feltwell T."/>
            <person name="Hance Z."/>
            <person name="Harris B."/>
            <person name="Hauser H."/>
            <person name="Holroyd S."/>
            <person name="Jagels K."/>
            <person name="James K.D."/>
            <person name="Lennard N."/>
            <person name="Line A."/>
            <person name="Mayes R."/>
            <person name="Moule S."/>
            <person name="Mungall K."/>
            <person name="Ormond D."/>
            <person name="Quail M.A."/>
            <person name="Rabbinowitsch E."/>
            <person name="Rutherford K.M."/>
            <person name="Sanders M."/>
            <person name="Sharp S."/>
            <person name="Simmonds M."/>
            <person name="Stevens K."/>
            <person name="Whitehead S."/>
            <person name="Barrell B.G."/>
            <person name="Spratt B.G."/>
            <person name="Parkhill J."/>
        </authorList>
    </citation>
    <scope>NUCLEOTIDE SEQUENCE [LARGE SCALE GENOMIC DNA]</scope>
    <source>
        <strain>MSSA476</strain>
    </source>
</reference>
<organism>
    <name type="scientific">Staphylococcus aureus (strain MSSA476)</name>
    <dbReference type="NCBI Taxonomy" id="282459"/>
    <lineage>
        <taxon>Bacteria</taxon>
        <taxon>Bacillati</taxon>
        <taxon>Bacillota</taxon>
        <taxon>Bacilli</taxon>
        <taxon>Bacillales</taxon>
        <taxon>Staphylococcaceae</taxon>
        <taxon>Staphylococcus</taxon>
    </lineage>
</organism>
<sequence length="341" mass="36979">MSTNIAINGMGRIGRMVLRIALQNKNLNVVAINASYPPETIAHLINYDTTHGKYNLKVEPIENGLQVGDHKIKLVADRNPENLPWKELDIDIAIDATGKFNHGDKAIAHIKAGAKKVLLTGPSKGGHVQMVVKGVNDNQLDIEAFDIFSNASCTTNCIGPVAKVLNNQFGIVNGLMTTVHAITNDQKNIDNPHKDLRRARSCNESIIPTSTGAAKALKEVLPELEGKLHGMALRVPTKNVSLVDLVVDLEKEVTAEEVNQAFENAGLEGIIEVEHQPLVSVDFNTNPNSAIIDAKSTMVMSGNKVKVIAWYDNEWGYSNRVVDVAEQIGALLTSKETVSAS</sequence>
<proteinExistence type="inferred from homology"/>